<sequence>MSIRTPPRLLELAGRSLLRDQALAMSTLEELPTELFPPLFMEAFSRRRCEALKLMVQAWPFRRLPLRPLIKMPCLEAFQAVLDGLDALLTQGVHPRRWKLQVLDLQDVCENFWMVWSEAMARGCFLNAKRNKTPVQDCPRMRGQQPLTVFVELWLKNRTLDEYLTCLLLWVKQRKDLLHLCCKKLKILGMPFRNIRSILKMVNLDCIQEVEVNCKWVLPILTQFTPYLGHMRNLQKLVLSHMDVSRYVSPEQKKEIVTQFTTQFLKLCCLQKLSMNSVSFLEGHLDQLLSCLKTSLKVLTITNCVLLESDLKHLSQCPSISQLKTLDLSGIRLTNYSLVPLQILLEKVAATLEYLDLDDCGIIDSQVNAILPALSRCFELNTFSFCGNPISMATLENLLSHTIILKNLCVELYPAPRESYDADGTLCWSRFAQIRAELMKRVRDLRHPKRILFCTDCCPDCGNRSFYDLEADQCCC</sequence>
<keyword id="KW-0433">Leucine-rich repeat</keyword>
<keyword id="KW-1185">Reference proteome</keyword>
<keyword id="KW-0677">Repeat</keyword>
<keyword id="KW-0833">Ubl conjugation pathway</keyword>
<dbReference type="EMBL" id="AL358783">
    <property type="status" value="NOT_ANNOTATED_CDS"/>
    <property type="molecule type" value="Genomic_DNA"/>
</dbReference>
<dbReference type="EMBL" id="BC101342">
    <property type="protein sequence ID" value="AAI01343.1"/>
    <property type="molecule type" value="mRNA"/>
</dbReference>
<dbReference type="CCDS" id="CCDS30594.1"/>
<dbReference type="RefSeq" id="NP_001010889.1">
    <property type="nucleotide sequence ID" value="NM_001010889.2"/>
</dbReference>
<dbReference type="SMR" id="Q5VXH4"/>
<dbReference type="STRING" id="9606.ENSP00000365360"/>
<dbReference type="iPTMnet" id="Q5VXH4"/>
<dbReference type="PhosphoSitePlus" id="Q5VXH4"/>
<dbReference type="SwissPalm" id="Q5VXH4"/>
<dbReference type="BioMuta" id="PRAMEF6"/>
<dbReference type="DMDM" id="74757001"/>
<dbReference type="MassIVE" id="Q5VXH4"/>
<dbReference type="PaxDb" id="9606-ENSP00000365360"/>
<dbReference type="PeptideAtlas" id="Q5VXH4"/>
<dbReference type="ProteomicsDB" id="65591"/>
<dbReference type="Antibodypedia" id="68103">
    <property type="antibodies" value="62 antibodies from 14 providers"/>
</dbReference>
<dbReference type="DNASU" id="440561"/>
<dbReference type="Ensembl" id="ENST00000376189.5">
    <property type="protein sequence ID" value="ENSP00000365360.1"/>
    <property type="gene ID" value="ENSG00000232423.6"/>
</dbReference>
<dbReference type="Ensembl" id="ENST00000415464.6">
    <property type="protein sequence ID" value="ENSP00000401281.2"/>
    <property type="gene ID" value="ENSG00000232423.6"/>
</dbReference>
<dbReference type="Ensembl" id="ENST00000632295.1">
    <property type="protein sequence ID" value="ENSP00000487731.1"/>
    <property type="gene ID" value="ENSG00000282119.2"/>
</dbReference>
<dbReference type="Ensembl" id="ENST00000632388.1">
    <property type="protein sequence ID" value="ENSP00000488780.1"/>
    <property type="gene ID" value="ENSG00000282119.2"/>
</dbReference>
<dbReference type="GeneID" id="440561"/>
<dbReference type="KEGG" id="hsa:440561"/>
<dbReference type="MANE-Select" id="ENST00000376189.5">
    <property type="protein sequence ID" value="ENSP00000365360.1"/>
    <property type="RefSeq nucleotide sequence ID" value="NM_001010889.2"/>
    <property type="RefSeq protein sequence ID" value="NP_001010889.1"/>
</dbReference>
<dbReference type="UCSC" id="uc031tpn.1">
    <property type="organism name" value="human"/>
</dbReference>
<dbReference type="AGR" id="HGNC:30583"/>
<dbReference type="CTD" id="440561"/>
<dbReference type="GeneCards" id="PRAMEF6"/>
<dbReference type="HGNC" id="HGNC:30583">
    <property type="gene designation" value="PRAMEF6"/>
</dbReference>
<dbReference type="HPA" id="ENSG00000232423">
    <property type="expression patterns" value="Not detected"/>
</dbReference>
<dbReference type="neXtProt" id="NX_Q5VXH4"/>
<dbReference type="OpenTargets" id="ENSG00000232423"/>
<dbReference type="PharmGKB" id="PA142671143"/>
<dbReference type="VEuPathDB" id="HostDB:ENSG00000232423"/>
<dbReference type="eggNOG" id="ENOG502QWSJ">
    <property type="taxonomic scope" value="Eukaryota"/>
</dbReference>
<dbReference type="GeneTree" id="ENSGT01030000234531"/>
<dbReference type="HOGENOM" id="CLU_039635_2_1_1"/>
<dbReference type="InParanoid" id="Q5VXH4"/>
<dbReference type="OMA" id="RVMMSAY"/>
<dbReference type="OrthoDB" id="9915at9604"/>
<dbReference type="PAN-GO" id="Q5VXH4">
    <property type="GO annotations" value="1 GO annotation based on evolutionary models"/>
</dbReference>
<dbReference type="PhylomeDB" id="Q5VXH4"/>
<dbReference type="TreeFam" id="TF332708"/>
<dbReference type="UniPathway" id="UPA00143"/>
<dbReference type="BioGRID-ORCS" id="440561">
    <property type="hits" value="423 hits in 1019 CRISPR screens"/>
</dbReference>
<dbReference type="ChiTaRS" id="PRAMEF6">
    <property type="organism name" value="human"/>
</dbReference>
<dbReference type="GenomeRNAi" id="440561"/>
<dbReference type="Pharos" id="Q5VXH4">
    <property type="development level" value="Tdark"/>
</dbReference>
<dbReference type="PRO" id="PR:Q5VXH4"/>
<dbReference type="Proteomes" id="UP000005640">
    <property type="component" value="Chromosome 1"/>
</dbReference>
<dbReference type="RNAct" id="Q5VXH4">
    <property type="molecule type" value="protein"/>
</dbReference>
<dbReference type="Bgee" id="ENSG00000232423">
    <property type="expression patterns" value="Expressed in ectocervix"/>
</dbReference>
<dbReference type="GO" id="GO:0031462">
    <property type="term" value="C:Cul2-RING ubiquitin ligase complex"/>
    <property type="evidence" value="ECO:0000314"/>
    <property type="project" value="UniProtKB"/>
</dbReference>
<dbReference type="GO" id="GO:0005737">
    <property type="term" value="C:cytoplasm"/>
    <property type="evidence" value="ECO:0000318"/>
    <property type="project" value="GO_Central"/>
</dbReference>
<dbReference type="GO" id="GO:1990756">
    <property type="term" value="F:ubiquitin-like ligase-substrate adaptor activity"/>
    <property type="evidence" value="ECO:0000314"/>
    <property type="project" value="UniProtKB"/>
</dbReference>
<dbReference type="GO" id="GO:0043066">
    <property type="term" value="P:negative regulation of apoptotic process"/>
    <property type="evidence" value="ECO:0007669"/>
    <property type="project" value="InterPro"/>
</dbReference>
<dbReference type="GO" id="GO:0045596">
    <property type="term" value="P:negative regulation of cell differentiation"/>
    <property type="evidence" value="ECO:0007669"/>
    <property type="project" value="InterPro"/>
</dbReference>
<dbReference type="GO" id="GO:0045892">
    <property type="term" value="P:negative regulation of DNA-templated transcription"/>
    <property type="evidence" value="ECO:0007669"/>
    <property type="project" value="InterPro"/>
</dbReference>
<dbReference type="GO" id="GO:0008284">
    <property type="term" value="P:positive regulation of cell population proliferation"/>
    <property type="evidence" value="ECO:0007669"/>
    <property type="project" value="InterPro"/>
</dbReference>
<dbReference type="GO" id="GO:0043161">
    <property type="term" value="P:proteasome-mediated ubiquitin-dependent protein catabolic process"/>
    <property type="evidence" value="ECO:0000314"/>
    <property type="project" value="UniProtKB"/>
</dbReference>
<dbReference type="GO" id="GO:0016567">
    <property type="term" value="P:protein ubiquitination"/>
    <property type="evidence" value="ECO:0007669"/>
    <property type="project" value="UniProtKB-UniPathway"/>
</dbReference>
<dbReference type="FunFam" id="3.80.10.10:FF:000079">
    <property type="entry name" value="PRAME family member 18"/>
    <property type="match status" value="1"/>
</dbReference>
<dbReference type="Gene3D" id="3.80.10.10">
    <property type="entry name" value="Ribonuclease Inhibitor"/>
    <property type="match status" value="1"/>
</dbReference>
<dbReference type="InterPro" id="IPR032675">
    <property type="entry name" value="LRR_dom_sf"/>
</dbReference>
<dbReference type="InterPro" id="IPR026271">
    <property type="entry name" value="PRAME"/>
</dbReference>
<dbReference type="InterPro" id="IPR050694">
    <property type="entry name" value="PRAME_domain"/>
</dbReference>
<dbReference type="PANTHER" id="PTHR14224:SF19">
    <property type="entry name" value="PRAME FAMILY MEMBER 11-RELATED"/>
    <property type="match status" value="1"/>
</dbReference>
<dbReference type="PANTHER" id="PTHR14224">
    <property type="entry name" value="SIMILAR TO PREFERENTIALLY EXPRESSED ANTIGEN IN MELANOMA-LIKE 3"/>
    <property type="match status" value="1"/>
</dbReference>
<dbReference type="PIRSF" id="PIRSF038286">
    <property type="entry name" value="PRAME"/>
    <property type="match status" value="1"/>
</dbReference>
<dbReference type="SUPFAM" id="SSF52047">
    <property type="entry name" value="RNI-like"/>
    <property type="match status" value="1"/>
</dbReference>
<proteinExistence type="evidence at protein level"/>
<comment type="function">
    <text evidence="2">Substrate-recognition component of a Cul2-RING (CRL2) E3 ubiquitin-protein ligase complex, which mediates ubiquitination of target proteins, leading to their degradation (PubMed:26138980). The CRL2(PRAMEF6) complex mediates ubiquitination and degradation of truncated MSRB1/SEPX1 selenoproteins produced by failed UGA/Sec decoding (PubMed:26138980).</text>
</comment>
<comment type="pathway">
    <text evidence="2">Protein modification; protein ubiquitination.</text>
</comment>
<comment type="subunit">
    <text evidence="2">Component of a CRL2 E3 ubiquitin-protein ligase complex, also named ECS (Elongin BC-CUL2/5-SOCS-box protein) complex, composed of CUL2, Elongin BC (ELOB and ELOC), RBX1 and substrate-specific adapter PRAMEF6.</text>
</comment>
<comment type="similarity">
    <text evidence="4">Belongs to the PRAME family.</text>
</comment>
<reference key="1">
    <citation type="journal article" date="2006" name="Nature">
        <title>The DNA sequence and biological annotation of human chromosome 1.</title>
        <authorList>
            <person name="Gregory S.G."/>
            <person name="Barlow K.F."/>
            <person name="McLay K.E."/>
            <person name="Kaul R."/>
            <person name="Swarbreck D."/>
            <person name="Dunham A."/>
            <person name="Scott C.E."/>
            <person name="Howe K.L."/>
            <person name="Woodfine K."/>
            <person name="Spencer C.C.A."/>
            <person name="Jones M.C."/>
            <person name="Gillson C."/>
            <person name="Searle S."/>
            <person name="Zhou Y."/>
            <person name="Kokocinski F."/>
            <person name="McDonald L."/>
            <person name="Evans R."/>
            <person name="Phillips K."/>
            <person name="Atkinson A."/>
            <person name="Cooper R."/>
            <person name="Jones C."/>
            <person name="Hall R.E."/>
            <person name="Andrews T.D."/>
            <person name="Lloyd C."/>
            <person name="Ainscough R."/>
            <person name="Almeida J.P."/>
            <person name="Ambrose K.D."/>
            <person name="Anderson F."/>
            <person name="Andrew R.W."/>
            <person name="Ashwell R.I.S."/>
            <person name="Aubin K."/>
            <person name="Babbage A.K."/>
            <person name="Bagguley C.L."/>
            <person name="Bailey J."/>
            <person name="Beasley H."/>
            <person name="Bethel G."/>
            <person name="Bird C.P."/>
            <person name="Bray-Allen S."/>
            <person name="Brown J.Y."/>
            <person name="Brown A.J."/>
            <person name="Buckley D."/>
            <person name="Burton J."/>
            <person name="Bye J."/>
            <person name="Carder C."/>
            <person name="Chapman J.C."/>
            <person name="Clark S.Y."/>
            <person name="Clarke G."/>
            <person name="Clee C."/>
            <person name="Cobley V."/>
            <person name="Collier R.E."/>
            <person name="Corby N."/>
            <person name="Coville G.J."/>
            <person name="Davies J."/>
            <person name="Deadman R."/>
            <person name="Dunn M."/>
            <person name="Earthrowl M."/>
            <person name="Ellington A.G."/>
            <person name="Errington H."/>
            <person name="Frankish A."/>
            <person name="Frankland J."/>
            <person name="French L."/>
            <person name="Garner P."/>
            <person name="Garnett J."/>
            <person name="Gay L."/>
            <person name="Ghori M.R.J."/>
            <person name="Gibson R."/>
            <person name="Gilby L.M."/>
            <person name="Gillett W."/>
            <person name="Glithero R.J."/>
            <person name="Grafham D.V."/>
            <person name="Griffiths C."/>
            <person name="Griffiths-Jones S."/>
            <person name="Grocock R."/>
            <person name="Hammond S."/>
            <person name="Harrison E.S.I."/>
            <person name="Hart E."/>
            <person name="Haugen E."/>
            <person name="Heath P.D."/>
            <person name="Holmes S."/>
            <person name="Holt K."/>
            <person name="Howden P.J."/>
            <person name="Hunt A.R."/>
            <person name="Hunt S.E."/>
            <person name="Hunter G."/>
            <person name="Isherwood J."/>
            <person name="James R."/>
            <person name="Johnson C."/>
            <person name="Johnson D."/>
            <person name="Joy A."/>
            <person name="Kay M."/>
            <person name="Kershaw J.K."/>
            <person name="Kibukawa M."/>
            <person name="Kimberley A.M."/>
            <person name="King A."/>
            <person name="Knights A.J."/>
            <person name="Lad H."/>
            <person name="Laird G."/>
            <person name="Lawlor S."/>
            <person name="Leongamornlert D.A."/>
            <person name="Lloyd D.M."/>
            <person name="Loveland J."/>
            <person name="Lovell J."/>
            <person name="Lush M.J."/>
            <person name="Lyne R."/>
            <person name="Martin S."/>
            <person name="Mashreghi-Mohammadi M."/>
            <person name="Matthews L."/>
            <person name="Matthews N.S.W."/>
            <person name="McLaren S."/>
            <person name="Milne S."/>
            <person name="Mistry S."/>
            <person name="Moore M.J.F."/>
            <person name="Nickerson T."/>
            <person name="O'Dell C.N."/>
            <person name="Oliver K."/>
            <person name="Palmeiri A."/>
            <person name="Palmer S.A."/>
            <person name="Parker A."/>
            <person name="Patel D."/>
            <person name="Pearce A.V."/>
            <person name="Peck A.I."/>
            <person name="Pelan S."/>
            <person name="Phelps K."/>
            <person name="Phillimore B.J."/>
            <person name="Plumb R."/>
            <person name="Rajan J."/>
            <person name="Raymond C."/>
            <person name="Rouse G."/>
            <person name="Saenphimmachak C."/>
            <person name="Sehra H.K."/>
            <person name="Sheridan E."/>
            <person name="Shownkeen R."/>
            <person name="Sims S."/>
            <person name="Skuce C.D."/>
            <person name="Smith M."/>
            <person name="Steward C."/>
            <person name="Subramanian S."/>
            <person name="Sycamore N."/>
            <person name="Tracey A."/>
            <person name="Tromans A."/>
            <person name="Van Helmond Z."/>
            <person name="Wall M."/>
            <person name="Wallis J.M."/>
            <person name="White S."/>
            <person name="Whitehead S.L."/>
            <person name="Wilkinson J.E."/>
            <person name="Willey D.L."/>
            <person name="Williams H."/>
            <person name="Wilming L."/>
            <person name="Wray P.W."/>
            <person name="Wu Z."/>
            <person name="Coulson A."/>
            <person name="Vaudin M."/>
            <person name="Sulston J.E."/>
            <person name="Durbin R.M."/>
            <person name="Hubbard T."/>
            <person name="Wooster R."/>
            <person name="Dunham I."/>
            <person name="Carter N.P."/>
            <person name="McVean G."/>
            <person name="Ross M.T."/>
            <person name="Harrow J."/>
            <person name="Olson M.V."/>
            <person name="Beck S."/>
            <person name="Rogers J."/>
            <person name="Bentley D.R."/>
        </authorList>
    </citation>
    <scope>NUCLEOTIDE SEQUENCE [LARGE SCALE GENOMIC DNA]</scope>
</reference>
<reference key="2">
    <citation type="journal article" date="2004" name="Genome Res.">
        <title>The status, quality, and expansion of the NIH full-length cDNA project: the Mammalian Gene Collection (MGC).</title>
        <authorList>
            <consortium name="The MGC Project Team"/>
        </authorList>
    </citation>
    <scope>NUCLEOTIDE SEQUENCE [LARGE SCALE MRNA]</scope>
</reference>
<reference key="3">
    <citation type="journal article" date="2015" name="Science">
        <title>SELENOPROTEINS. CRL2 aids elimination of truncated selenoproteins produced by failed UGA/Sec decoding.</title>
        <authorList>
            <person name="Lin H.C."/>
            <person name="Ho S.C."/>
            <person name="Chen Y.Y."/>
            <person name="Khoo K.H."/>
            <person name="Hsu P.H."/>
            <person name="Yen H.C."/>
        </authorList>
    </citation>
    <scope>FUNCTION</scope>
    <scope>PATHWAY</scope>
    <scope>IDENTIFICATION IN A CRL2 E3 UBIQUITIN-PROTEIN LIGASE COMPLEX</scope>
</reference>
<gene>
    <name evidence="3 5" type="primary">PRAMEF6</name>
</gene>
<organism>
    <name type="scientific">Homo sapiens</name>
    <name type="common">Human</name>
    <dbReference type="NCBI Taxonomy" id="9606"/>
    <lineage>
        <taxon>Eukaryota</taxon>
        <taxon>Metazoa</taxon>
        <taxon>Chordata</taxon>
        <taxon>Craniata</taxon>
        <taxon>Vertebrata</taxon>
        <taxon>Euteleostomi</taxon>
        <taxon>Mammalia</taxon>
        <taxon>Eutheria</taxon>
        <taxon>Euarchontoglires</taxon>
        <taxon>Primates</taxon>
        <taxon>Haplorrhini</taxon>
        <taxon>Catarrhini</taxon>
        <taxon>Hominidae</taxon>
        <taxon>Homo</taxon>
    </lineage>
</organism>
<evidence type="ECO:0000250" key="1">
    <source>
        <dbReference type="UniProtKB" id="Q3UWY1"/>
    </source>
</evidence>
<evidence type="ECO:0000269" key="2">
    <source>
    </source>
</evidence>
<evidence type="ECO:0000303" key="3">
    <source>
    </source>
</evidence>
<evidence type="ECO:0000305" key="4"/>
<evidence type="ECO:0000312" key="5">
    <source>
        <dbReference type="HGNC" id="HGNC:30583"/>
    </source>
</evidence>
<accession>Q5VXH4</accession>
<accession>A0AUJ9</accession>
<protein>
    <recommendedName>
        <fullName evidence="4">PRAME family member 6</fullName>
    </recommendedName>
</protein>
<name>PRAM6_HUMAN</name>
<feature type="chain" id="PRO_0000156980" description="PRAME family member 6">
    <location>
        <begin position="1"/>
        <end position="476"/>
    </location>
</feature>
<feature type="repeat" description="LRR 1; degenerate" evidence="1">
    <location>
        <begin position="97"/>
        <end position="124"/>
    </location>
</feature>
<feature type="repeat" description="LRR 2; degenerate" evidence="1">
    <location>
        <begin position="179"/>
        <end position="203"/>
    </location>
</feature>
<feature type="repeat" description="LRR 3; degenerate" evidence="1">
    <location>
        <begin position="204"/>
        <end position="230"/>
    </location>
</feature>
<feature type="repeat" description="LRR 4; degenerate" evidence="1">
    <location>
        <begin position="231"/>
        <end position="266"/>
    </location>
</feature>
<feature type="repeat" description="LRR 5" evidence="1">
    <location>
        <begin position="267"/>
        <end position="292"/>
    </location>
</feature>
<feature type="repeat" description="LRR 6" evidence="1">
    <location>
        <begin position="293"/>
        <end position="324"/>
    </location>
</feature>
<feature type="repeat" description="LRR 7" evidence="1">
    <location>
        <begin position="325"/>
        <end position="345"/>
    </location>
</feature>
<feature type="repeat" description="LRR 8" evidence="1">
    <location>
        <begin position="349"/>
        <end position="376"/>
    </location>
</feature>
<feature type="repeat" description="LRR 9" evidence="1">
    <location>
        <begin position="377"/>
        <end position="401"/>
    </location>
</feature>
<feature type="sequence conflict" description="In Ref. 2; AAI01343." evidence="4" ref="2">
    <original>S</original>
    <variation>N</variation>
    <location>
        <position position="16"/>
    </location>
</feature>